<sequence length="186" mass="21077">MLENLQGKFLIATPEIDDDYFDRTVIYICEHNSNGAMGLVINTPTDLSVLELITRMDFQMANQRNYHKDQMVLSGGPVSQDRGFIIHTKTEQEFLHSYRVTDNILLTTSGDVLDSLGKPEAPEKFIVCLGCATWKPEQLEQEIARNYWLISEANDKTLFETGYLERWVEANEMLGISGVLARAGRA</sequence>
<dbReference type="EMBL" id="CP000687">
    <property type="protein sequence ID" value="ABY68841.1"/>
    <property type="molecule type" value="Genomic_DNA"/>
</dbReference>
<dbReference type="RefSeq" id="WP_005596086.1">
    <property type="nucleotide sequence ID" value="NC_010278.1"/>
</dbReference>
<dbReference type="SMR" id="B0BSN9"/>
<dbReference type="KEGG" id="apj:APJL_0237"/>
<dbReference type="HOGENOM" id="CLU_057596_1_0_6"/>
<dbReference type="Proteomes" id="UP000008547">
    <property type="component" value="Chromosome"/>
</dbReference>
<dbReference type="GO" id="GO:0005829">
    <property type="term" value="C:cytosol"/>
    <property type="evidence" value="ECO:0007669"/>
    <property type="project" value="TreeGrafter"/>
</dbReference>
<dbReference type="Gene3D" id="3.40.1740.10">
    <property type="entry name" value="VC0467-like"/>
    <property type="match status" value="1"/>
</dbReference>
<dbReference type="Gene3D" id="3.30.70.1300">
    <property type="entry name" value="VC0467-like domains"/>
    <property type="match status" value="1"/>
</dbReference>
<dbReference type="HAMAP" id="MF_00758">
    <property type="entry name" value="UPF0301"/>
    <property type="match status" value="1"/>
</dbReference>
<dbReference type="InterPro" id="IPR003774">
    <property type="entry name" value="AlgH-like"/>
</dbReference>
<dbReference type="NCBIfam" id="NF001266">
    <property type="entry name" value="PRK00228.1-1"/>
    <property type="match status" value="1"/>
</dbReference>
<dbReference type="PANTHER" id="PTHR30327">
    <property type="entry name" value="UNCHARACTERIZED PROTEIN YQGE"/>
    <property type="match status" value="1"/>
</dbReference>
<dbReference type="PANTHER" id="PTHR30327:SF1">
    <property type="entry name" value="UPF0301 PROTEIN YQGE"/>
    <property type="match status" value="1"/>
</dbReference>
<dbReference type="Pfam" id="PF02622">
    <property type="entry name" value="DUF179"/>
    <property type="match status" value="1"/>
</dbReference>
<dbReference type="SUPFAM" id="SSF143456">
    <property type="entry name" value="VC0467-like"/>
    <property type="match status" value="1"/>
</dbReference>
<name>Y237_ACTPJ</name>
<feature type="chain" id="PRO_1000198249" description="UPF0301 protein APJL_0237">
    <location>
        <begin position="1"/>
        <end position="186"/>
    </location>
</feature>
<comment type="similarity">
    <text evidence="1">Belongs to the UPF0301 (AlgH) family.</text>
</comment>
<protein>
    <recommendedName>
        <fullName evidence="1">UPF0301 protein APJL_0237</fullName>
    </recommendedName>
</protein>
<proteinExistence type="inferred from homology"/>
<organism>
    <name type="scientific">Actinobacillus pleuropneumoniae serotype 3 (strain JL03)</name>
    <dbReference type="NCBI Taxonomy" id="434271"/>
    <lineage>
        <taxon>Bacteria</taxon>
        <taxon>Pseudomonadati</taxon>
        <taxon>Pseudomonadota</taxon>
        <taxon>Gammaproteobacteria</taxon>
        <taxon>Pasteurellales</taxon>
        <taxon>Pasteurellaceae</taxon>
        <taxon>Actinobacillus</taxon>
    </lineage>
</organism>
<accession>B0BSN9</accession>
<gene>
    <name type="ordered locus">APJL_0237</name>
</gene>
<reference key="1">
    <citation type="journal article" date="2008" name="PLoS ONE">
        <title>Genome biology of Actinobacillus pleuropneumoniae JL03, an isolate of serotype 3 prevalent in China.</title>
        <authorList>
            <person name="Xu Z."/>
            <person name="Zhou Y."/>
            <person name="Li L."/>
            <person name="Zhou R."/>
            <person name="Xiao S."/>
            <person name="Wan Y."/>
            <person name="Zhang S."/>
            <person name="Wang K."/>
            <person name="Li W."/>
            <person name="Li L."/>
            <person name="Jin H."/>
            <person name="Kang M."/>
            <person name="Dalai B."/>
            <person name="Li T."/>
            <person name="Liu L."/>
            <person name="Cheng Y."/>
            <person name="Zhang L."/>
            <person name="Xu T."/>
            <person name="Zheng H."/>
            <person name="Pu S."/>
            <person name="Wang B."/>
            <person name="Gu W."/>
            <person name="Zhang X.L."/>
            <person name="Zhu G.-F."/>
            <person name="Wang S."/>
            <person name="Zhao G.-P."/>
            <person name="Chen H."/>
        </authorList>
    </citation>
    <scope>NUCLEOTIDE SEQUENCE [LARGE SCALE GENOMIC DNA]</scope>
    <source>
        <strain>JL03</strain>
    </source>
</reference>
<evidence type="ECO:0000255" key="1">
    <source>
        <dbReference type="HAMAP-Rule" id="MF_00758"/>
    </source>
</evidence>